<accession>Q4JV82</accession>
<dbReference type="EC" id="2.5.1.75" evidence="1"/>
<dbReference type="EMBL" id="CR931997">
    <property type="protein sequence ID" value="CAI37275.1"/>
    <property type="molecule type" value="Genomic_DNA"/>
</dbReference>
<dbReference type="RefSeq" id="WP_005295100.1">
    <property type="nucleotide sequence ID" value="NC_007164.1"/>
</dbReference>
<dbReference type="SMR" id="Q4JV82"/>
<dbReference type="STRING" id="306537.jk1111"/>
<dbReference type="GeneID" id="92738632"/>
<dbReference type="KEGG" id="cjk:jk1111"/>
<dbReference type="eggNOG" id="COG0324">
    <property type="taxonomic scope" value="Bacteria"/>
</dbReference>
<dbReference type="HOGENOM" id="CLU_032616_0_1_11"/>
<dbReference type="OrthoDB" id="9776390at2"/>
<dbReference type="Proteomes" id="UP000000545">
    <property type="component" value="Chromosome"/>
</dbReference>
<dbReference type="GO" id="GO:0005524">
    <property type="term" value="F:ATP binding"/>
    <property type="evidence" value="ECO:0007669"/>
    <property type="project" value="UniProtKB-UniRule"/>
</dbReference>
<dbReference type="GO" id="GO:0052381">
    <property type="term" value="F:tRNA dimethylallyltransferase activity"/>
    <property type="evidence" value="ECO:0007669"/>
    <property type="project" value="UniProtKB-UniRule"/>
</dbReference>
<dbReference type="GO" id="GO:0006400">
    <property type="term" value="P:tRNA modification"/>
    <property type="evidence" value="ECO:0007669"/>
    <property type="project" value="TreeGrafter"/>
</dbReference>
<dbReference type="FunFam" id="1.10.20.140:FF:000001">
    <property type="entry name" value="tRNA dimethylallyltransferase"/>
    <property type="match status" value="1"/>
</dbReference>
<dbReference type="Gene3D" id="1.10.20.140">
    <property type="match status" value="1"/>
</dbReference>
<dbReference type="Gene3D" id="3.40.50.300">
    <property type="entry name" value="P-loop containing nucleotide triphosphate hydrolases"/>
    <property type="match status" value="1"/>
</dbReference>
<dbReference type="HAMAP" id="MF_00185">
    <property type="entry name" value="IPP_trans"/>
    <property type="match status" value="1"/>
</dbReference>
<dbReference type="InterPro" id="IPR039657">
    <property type="entry name" value="Dimethylallyltransferase"/>
</dbReference>
<dbReference type="InterPro" id="IPR018022">
    <property type="entry name" value="IPT"/>
</dbReference>
<dbReference type="InterPro" id="IPR027417">
    <property type="entry name" value="P-loop_NTPase"/>
</dbReference>
<dbReference type="NCBIfam" id="TIGR00174">
    <property type="entry name" value="miaA"/>
    <property type="match status" value="1"/>
</dbReference>
<dbReference type="PANTHER" id="PTHR11088">
    <property type="entry name" value="TRNA DIMETHYLALLYLTRANSFERASE"/>
    <property type="match status" value="1"/>
</dbReference>
<dbReference type="PANTHER" id="PTHR11088:SF60">
    <property type="entry name" value="TRNA DIMETHYLALLYLTRANSFERASE"/>
    <property type="match status" value="1"/>
</dbReference>
<dbReference type="Pfam" id="PF01715">
    <property type="entry name" value="IPPT"/>
    <property type="match status" value="1"/>
</dbReference>
<dbReference type="SUPFAM" id="SSF52540">
    <property type="entry name" value="P-loop containing nucleoside triphosphate hydrolases"/>
    <property type="match status" value="2"/>
</dbReference>
<keyword id="KW-0067">ATP-binding</keyword>
<keyword id="KW-0460">Magnesium</keyword>
<keyword id="KW-0547">Nucleotide-binding</keyword>
<keyword id="KW-1185">Reference proteome</keyword>
<keyword id="KW-0808">Transferase</keyword>
<keyword id="KW-0819">tRNA processing</keyword>
<gene>
    <name evidence="1" type="primary">miaA</name>
    <name type="ordered locus">jk1111</name>
</gene>
<comment type="function">
    <text evidence="1">Catalyzes the transfer of a dimethylallyl group onto the adenine at position 37 in tRNAs that read codons beginning with uridine, leading to the formation of N6-(dimethylallyl)adenosine (i(6)A).</text>
</comment>
<comment type="catalytic activity">
    <reaction evidence="1">
        <text>adenosine(37) in tRNA + dimethylallyl diphosphate = N(6)-dimethylallyladenosine(37) in tRNA + diphosphate</text>
        <dbReference type="Rhea" id="RHEA:26482"/>
        <dbReference type="Rhea" id="RHEA-COMP:10162"/>
        <dbReference type="Rhea" id="RHEA-COMP:10375"/>
        <dbReference type="ChEBI" id="CHEBI:33019"/>
        <dbReference type="ChEBI" id="CHEBI:57623"/>
        <dbReference type="ChEBI" id="CHEBI:74411"/>
        <dbReference type="ChEBI" id="CHEBI:74415"/>
        <dbReference type="EC" id="2.5.1.75"/>
    </reaction>
</comment>
<comment type="cofactor">
    <cofactor evidence="1">
        <name>Mg(2+)</name>
        <dbReference type="ChEBI" id="CHEBI:18420"/>
    </cofactor>
</comment>
<comment type="subunit">
    <text evidence="1">Monomer.</text>
</comment>
<comment type="similarity">
    <text evidence="1">Belongs to the IPP transferase family.</text>
</comment>
<sequence length="310" mass="34597">MSSSTQIRPIAVVGPTASGKTAISLELAKLLDGEVVNIDSMQLYRGMDIGTAKVPPEERQGIPHHQLDIWPVTKPASVAEYRSGAIATVEEILSRGKMPIIVGGSMMYIQALVDEWDFPPTDPIVREKWQRELDVRGVAAMHQYLATIDPEAARIIEDNDPRRTVRALEVIELTGKPFAASQPPKNSTPRWNMRLLGLSAPAEWLNPRIEQRVRQMFDQGLVEEVRSLVADGLARTSTAGQAIGYAQVLDYFAGELTFEEAVDRTITGTRRYARRQRSWFRRDKRIIWIDANSPDPVRAATEALGIVSQQ</sequence>
<reference key="1">
    <citation type="journal article" date="2005" name="J. Bacteriol.">
        <title>Complete genome sequence and analysis of the multiresistant nosocomial pathogen Corynebacterium jeikeium K411, a lipid-requiring bacterium of the human skin flora.</title>
        <authorList>
            <person name="Tauch A."/>
            <person name="Kaiser O."/>
            <person name="Hain T."/>
            <person name="Goesmann A."/>
            <person name="Weisshaar B."/>
            <person name="Albersmeier A."/>
            <person name="Bekel T."/>
            <person name="Bischoff N."/>
            <person name="Brune I."/>
            <person name="Chakraborty T."/>
            <person name="Kalinowski J."/>
            <person name="Meyer F."/>
            <person name="Rupp O."/>
            <person name="Schneiker S."/>
            <person name="Viehoever P."/>
            <person name="Puehler A."/>
        </authorList>
    </citation>
    <scope>NUCLEOTIDE SEQUENCE [LARGE SCALE GENOMIC DNA]</scope>
    <source>
        <strain>K411</strain>
    </source>
</reference>
<proteinExistence type="inferred from homology"/>
<organism>
    <name type="scientific">Corynebacterium jeikeium (strain K411)</name>
    <dbReference type="NCBI Taxonomy" id="306537"/>
    <lineage>
        <taxon>Bacteria</taxon>
        <taxon>Bacillati</taxon>
        <taxon>Actinomycetota</taxon>
        <taxon>Actinomycetes</taxon>
        <taxon>Mycobacteriales</taxon>
        <taxon>Corynebacteriaceae</taxon>
        <taxon>Corynebacterium</taxon>
    </lineage>
</organism>
<name>MIAA_CORJK</name>
<protein>
    <recommendedName>
        <fullName evidence="1">tRNA dimethylallyltransferase</fullName>
        <ecNumber evidence="1">2.5.1.75</ecNumber>
    </recommendedName>
    <alternativeName>
        <fullName evidence="1">Dimethylallyl diphosphate:tRNA dimethylallyltransferase</fullName>
        <shortName evidence="1">DMAPP:tRNA dimethylallyltransferase</shortName>
        <shortName evidence="1">DMATase</shortName>
    </alternativeName>
    <alternativeName>
        <fullName evidence="1">Isopentenyl-diphosphate:tRNA isopentenyltransferase</fullName>
        <shortName evidence="1">IPP transferase</shortName>
        <shortName evidence="1">IPPT</shortName>
        <shortName evidence="1">IPTase</shortName>
    </alternativeName>
</protein>
<evidence type="ECO:0000255" key="1">
    <source>
        <dbReference type="HAMAP-Rule" id="MF_00185"/>
    </source>
</evidence>
<feature type="chain" id="PRO_0000377127" description="tRNA dimethylallyltransferase">
    <location>
        <begin position="1"/>
        <end position="310"/>
    </location>
</feature>
<feature type="region of interest" description="Interaction with substrate tRNA" evidence="1">
    <location>
        <begin position="39"/>
        <end position="42"/>
    </location>
</feature>
<feature type="binding site" evidence="1">
    <location>
        <begin position="14"/>
        <end position="21"/>
    </location>
    <ligand>
        <name>ATP</name>
        <dbReference type="ChEBI" id="CHEBI:30616"/>
    </ligand>
</feature>
<feature type="binding site" evidence="1">
    <location>
        <begin position="16"/>
        <end position="21"/>
    </location>
    <ligand>
        <name>substrate</name>
    </ligand>
</feature>
<feature type="site" description="Interaction with substrate tRNA" evidence="1">
    <location>
        <position position="105"/>
    </location>
</feature>
<feature type="site" description="Interaction with substrate tRNA" evidence="1">
    <location>
        <position position="126"/>
    </location>
</feature>